<keyword id="KW-0903">Direct protein sequencing</keyword>
<keyword id="KW-0325">Glycoprotein</keyword>
<keyword id="KW-0326">Glycosidase</keyword>
<keyword id="KW-0378">Hydrolase</keyword>
<keyword id="KW-0732">Signal</keyword>
<reference key="1">
    <citation type="journal article" date="1994" name="J. Bacteriol.">
        <title>Molecular cloning and expression of the Candida albicans beta-N-acetylglucosaminidase (HEX1) gene.</title>
        <authorList>
            <person name="Cannon R.D."/>
            <person name="Niimi K."/>
            <person name="Jenkinson H.F."/>
            <person name="Shepherd M.G."/>
        </authorList>
    </citation>
    <scope>NUCLEOTIDE SEQUENCE [GENOMIC DNA]</scope>
    <scope>PROTEIN SEQUENCE OF 23-42</scope>
    <source>
        <strain>A72</strain>
    </source>
</reference>
<dbReference type="EC" id="3.2.1.52"/>
<dbReference type="EMBL" id="L26488">
    <property type="protein sequence ID" value="AAA34346.2"/>
    <property type="molecule type" value="Genomic_DNA"/>
</dbReference>
<dbReference type="PIR" id="A55588">
    <property type="entry name" value="A55588"/>
</dbReference>
<dbReference type="SMR" id="P43077"/>
<dbReference type="CAZy" id="GH20">
    <property type="family name" value="Glycoside Hydrolase Family 20"/>
</dbReference>
<dbReference type="GlyCosmos" id="P43077">
    <property type="glycosylation" value="7 sites, No reported glycans"/>
</dbReference>
<dbReference type="VEuPathDB" id="FungiDB:C5_03610W_A"/>
<dbReference type="VEuPathDB" id="FungiDB:CAWG_04734"/>
<dbReference type="PHI-base" id="PHI:4987"/>
<dbReference type="GO" id="GO:0016020">
    <property type="term" value="C:membrane"/>
    <property type="evidence" value="ECO:0007669"/>
    <property type="project" value="TreeGrafter"/>
</dbReference>
<dbReference type="GO" id="GO:0016231">
    <property type="term" value="F:beta-N-acetylglucosaminidase activity"/>
    <property type="evidence" value="ECO:0007669"/>
    <property type="project" value="TreeGrafter"/>
</dbReference>
<dbReference type="GO" id="GO:0005975">
    <property type="term" value="P:carbohydrate metabolic process"/>
    <property type="evidence" value="ECO:0007669"/>
    <property type="project" value="InterPro"/>
</dbReference>
<dbReference type="GO" id="GO:0030203">
    <property type="term" value="P:glycosaminoglycan metabolic process"/>
    <property type="evidence" value="ECO:0007669"/>
    <property type="project" value="TreeGrafter"/>
</dbReference>
<dbReference type="CDD" id="cd06562">
    <property type="entry name" value="GH20_HexA_HexB-like"/>
    <property type="match status" value="1"/>
</dbReference>
<dbReference type="FunFam" id="3.20.20.80:FF:000063">
    <property type="entry name" value="Beta-hexosaminidase"/>
    <property type="match status" value="1"/>
</dbReference>
<dbReference type="Gene3D" id="3.30.379.10">
    <property type="entry name" value="Chitobiase/beta-hexosaminidase domain 2-like"/>
    <property type="match status" value="1"/>
</dbReference>
<dbReference type="Gene3D" id="3.20.20.80">
    <property type="entry name" value="Glycosidases"/>
    <property type="match status" value="1"/>
</dbReference>
<dbReference type="InterPro" id="IPR025705">
    <property type="entry name" value="Beta_hexosaminidase_sua/sub"/>
</dbReference>
<dbReference type="InterPro" id="IPR015883">
    <property type="entry name" value="Glyco_hydro_20_cat"/>
</dbReference>
<dbReference type="InterPro" id="IPR017853">
    <property type="entry name" value="Glycoside_hydrolase_SF"/>
</dbReference>
<dbReference type="InterPro" id="IPR029018">
    <property type="entry name" value="Hex-like_dom2"/>
</dbReference>
<dbReference type="InterPro" id="IPR029019">
    <property type="entry name" value="HEX_eukaryotic_N"/>
</dbReference>
<dbReference type="PANTHER" id="PTHR22600">
    <property type="entry name" value="BETA-HEXOSAMINIDASE"/>
    <property type="match status" value="1"/>
</dbReference>
<dbReference type="PANTHER" id="PTHR22600:SF26">
    <property type="entry name" value="BETA-N-ACETYLHEXOSAMINIDASE"/>
    <property type="match status" value="1"/>
</dbReference>
<dbReference type="Pfam" id="PF00728">
    <property type="entry name" value="Glyco_hydro_20"/>
    <property type="match status" value="1"/>
</dbReference>
<dbReference type="Pfam" id="PF14845">
    <property type="entry name" value="Glycohydro_20b2"/>
    <property type="match status" value="1"/>
</dbReference>
<dbReference type="PIRSF" id="PIRSF001093">
    <property type="entry name" value="B-hxosamndse_ab_euk"/>
    <property type="match status" value="1"/>
</dbReference>
<dbReference type="PRINTS" id="PR00738">
    <property type="entry name" value="GLHYDRLASE20"/>
</dbReference>
<dbReference type="SUPFAM" id="SSF51445">
    <property type="entry name" value="(Trans)glycosidases"/>
    <property type="match status" value="1"/>
</dbReference>
<dbReference type="SUPFAM" id="SSF55545">
    <property type="entry name" value="beta-N-acetylhexosaminidase-like domain"/>
    <property type="match status" value="1"/>
</dbReference>
<sequence>MVLDKMIIFHLLLWLCNVVVHAAKVEILPAPQSVTWENDTAIIINPRLLQANTSCPLLEDAFVRTVSAIEKSKWHPFPIDDFNTANGKNIKTSLVHIQVDDATVDLQLGVNESYTLKINTDGINIHAATTWGALHGLVSLQQLIIHTSEDKYVVPSSVTISDFPNFKHRGLMIDSGRNFLTVDSILEQIDIMALSKMNSLHWHLADSQSWPVALESYPHMIKDAYSNDEVYSKNDLKYIVDYARARGVRVIPEIDMPGHARAGWKQVDPTIVECADAFWTDAAVEPPPGQLNIESEKTYEVISNVYNELSDIFIDDVFHVGNDELQEKCYSAQLSPNNTVTDLLKRYLKKALPIFNKVNHRKLTMWDDVLLSDVSADKIPSNITLQVWHEISGVKNLTSRGYDVVVSSSDFLYLDCGNAGWVTNDPRYVETPENVDFNTGQGGSWCGPYKSYQRIYNFDFTANLTETEKNHVLGREAALWSEQVDSTVLTTKIWPRTAALAELTWSGNKDSNGHHRGYEFTQRILNFREYLVKLGYGVSPLVPKYCLLNPHACDLYKNPPVY</sequence>
<comment type="function">
    <text>Has a broad substrate specificity.</text>
</comment>
<comment type="catalytic activity">
    <reaction>
        <text>Hydrolysis of terminal non-reducing N-acetyl-D-hexosamine residues in N-acetyl-beta-D-hexosaminides.</text>
        <dbReference type="EC" id="3.2.1.52"/>
    </reaction>
</comment>
<comment type="induction">
    <text>By growth on N-acetylglucosamine.</text>
</comment>
<comment type="similarity">
    <text evidence="3">Belongs to the glycosyl hydrolase 20 family.</text>
</comment>
<protein>
    <recommendedName>
        <fullName>Beta-hexosaminidase</fullName>
        <ecNumber>3.2.1.52</ecNumber>
    </recommendedName>
    <alternativeName>
        <fullName>Beta-GlcNAcase</fullName>
    </alternativeName>
    <alternativeName>
        <fullName>Beta-N-acetylhexosaminidase</fullName>
    </alternativeName>
    <alternativeName>
        <fullName>N-acetyl-beta-glucosaminidase</fullName>
    </alternativeName>
</protein>
<proteinExistence type="evidence at protein level"/>
<organism>
    <name type="scientific">Candida albicans</name>
    <name type="common">Yeast</name>
    <dbReference type="NCBI Taxonomy" id="5476"/>
    <lineage>
        <taxon>Eukaryota</taxon>
        <taxon>Fungi</taxon>
        <taxon>Dikarya</taxon>
        <taxon>Ascomycota</taxon>
        <taxon>Saccharomycotina</taxon>
        <taxon>Pichiomycetes</taxon>
        <taxon>Debaryomycetaceae</taxon>
        <taxon>Candida/Lodderomyces clade</taxon>
        <taxon>Candida</taxon>
    </lineage>
</organism>
<gene>
    <name type="primary">HEX1</name>
</gene>
<name>HEX1_CANAX</name>
<feature type="signal peptide" evidence="2">
    <location>
        <begin position="1"/>
        <end position="22"/>
    </location>
</feature>
<feature type="chain" id="PRO_0000012014" description="Beta-hexosaminidase">
    <location>
        <begin position="23"/>
        <end position="562"/>
    </location>
</feature>
<feature type="glycosylation site" description="N-linked (GlcNAc...) asparagine" evidence="1">
    <location>
        <position position="38"/>
    </location>
</feature>
<feature type="glycosylation site" description="N-linked (GlcNAc...) asparagine" evidence="1">
    <location>
        <position position="52"/>
    </location>
</feature>
<feature type="glycosylation site" description="N-linked (GlcNAc...) asparagine" evidence="1">
    <location>
        <position position="111"/>
    </location>
</feature>
<feature type="glycosylation site" description="N-linked (GlcNAc...) asparagine" evidence="1">
    <location>
        <position position="337"/>
    </location>
</feature>
<feature type="glycosylation site" description="N-linked (GlcNAc...) asparagine" evidence="1">
    <location>
        <position position="382"/>
    </location>
</feature>
<feature type="glycosylation site" description="N-linked (GlcNAc...) asparagine" evidence="1">
    <location>
        <position position="396"/>
    </location>
</feature>
<feature type="glycosylation site" description="N-linked (GlcNAc...) asparagine" evidence="1">
    <location>
        <position position="463"/>
    </location>
</feature>
<evidence type="ECO:0000255" key="1"/>
<evidence type="ECO:0000269" key="2">
    <source>
    </source>
</evidence>
<evidence type="ECO:0000305" key="3"/>
<accession>P43077</accession>